<organism>
    <name type="scientific">Bradyrhizobium diazoefficiens (strain JCM 10833 / BCRC 13528 / IAM 13628 / NBRC 14792 / USDA 110)</name>
    <dbReference type="NCBI Taxonomy" id="224911"/>
    <lineage>
        <taxon>Bacteria</taxon>
        <taxon>Pseudomonadati</taxon>
        <taxon>Pseudomonadota</taxon>
        <taxon>Alphaproteobacteria</taxon>
        <taxon>Hyphomicrobiales</taxon>
        <taxon>Nitrobacteraceae</taxon>
        <taxon>Bradyrhizobium</taxon>
    </lineage>
</organism>
<protein>
    <recommendedName>
        <fullName evidence="1">Probable septum site-determining protein MinC</fullName>
    </recommendedName>
</protein>
<evidence type="ECO:0000255" key="1">
    <source>
        <dbReference type="HAMAP-Rule" id="MF_00267"/>
    </source>
</evidence>
<sequence length="231" mass="24676">MEAAAKVQRQMVRLRGRSYVAFVFVPTVPILDWLQEIDATIARSPGFFAGRPVVIDLSSVDLSQSGINHLLTSLQDRNIRVLGIEGVEEGRLTPMMPPLLSGGRSCVVEPSAPKKVEKAEAKPTSLLLENPVRSGQTVIFPEGDVTILGSVGSGAEVVAGGSIHVYGALRGRAMAGVNGHTSARIYCQKIEAELLAIDGFYQTADDIDAALRGKPAQAWLQGNTMRITALN</sequence>
<dbReference type="EMBL" id="BA000040">
    <property type="protein sequence ID" value="BAC49476.1"/>
    <property type="molecule type" value="Genomic_DNA"/>
</dbReference>
<dbReference type="RefSeq" id="NP_770851.1">
    <property type="nucleotide sequence ID" value="NC_004463.1"/>
</dbReference>
<dbReference type="RefSeq" id="WP_011086984.1">
    <property type="nucleotide sequence ID" value="NC_004463.1"/>
</dbReference>
<dbReference type="SMR" id="Q89MI2"/>
<dbReference type="FunCoup" id="Q89MI2">
    <property type="interactions" value="41"/>
</dbReference>
<dbReference type="STRING" id="224911.AAV28_18105"/>
<dbReference type="EnsemblBacteria" id="BAC49476">
    <property type="protein sequence ID" value="BAC49476"/>
    <property type="gene ID" value="BAC49476"/>
</dbReference>
<dbReference type="GeneID" id="46491212"/>
<dbReference type="KEGG" id="bja:blr4211"/>
<dbReference type="PATRIC" id="fig|224911.44.peg.3939"/>
<dbReference type="eggNOG" id="COG0850">
    <property type="taxonomic scope" value="Bacteria"/>
</dbReference>
<dbReference type="HOGENOM" id="CLU_067812_1_0_5"/>
<dbReference type="InParanoid" id="Q89MI2"/>
<dbReference type="OrthoDB" id="9794530at2"/>
<dbReference type="PhylomeDB" id="Q89MI2"/>
<dbReference type="Proteomes" id="UP000002526">
    <property type="component" value="Chromosome"/>
</dbReference>
<dbReference type="GO" id="GO:0000902">
    <property type="term" value="P:cell morphogenesis"/>
    <property type="evidence" value="ECO:0007669"/>
    <property type="project" value="InterPro"/>
</dbReference>
<dbReference type="GO" id="GO:0000917">
    <property type="term" value="P:division septum assembly"/>
    <property type="evidence" value="ECO:0007669"/>
    <property type="project" value="UniProtKB-KW"/>
</dbReference>
<dbReference type="GO" id="GO:0051302">
    <property type="term" value="P:regulation of cell division"/>
    <property type="evidence" value="ECO:0007669"/>
    <property type="project" value="InterPro"/>
</dbReference>
<dbReference type="GO" id="GO:1901891">
    <property type="term" value="P:regulation of cell septum assembly"/>
    <property type="evidence" value="ECO:0007669"/>
    <property type="project" value="InterPro"/>
</dbReference>
<dbReference type="Gene3D" id="2.160.20.70">
    <property type="match status" value="1"/>
</dbReference>
<dbReference type="Gene3D" id="3.30.70.260">
    <property type="match status" value="1"/>
</dbReference>
<dbReference type="HAMAP" id="MF_00267">
    <property type="entry name" value="MinC"/>
    <property type="match status" value="1"/>
</dbReference>
<dbReference type="InterPro" id="IPR016098">
    <property type="entry name" value="CAP/MinC_C"/>
</dbReference>
<dbReference type="InterPro" id="IPR013033">
    <property type="entry name" value="MinC"/>
</dbReference>
<dbReference type="InterPro" id="IPR036145">
    <property type="entry name" value="MinC_C_sf"/>
</dbReference>
<dbReference type="InterPro" id="IPR007874">
    <property type="entry name" value="MinC_N"/>
</dbReference>
<dbReference type="InterPro" id="IPR005526">
    <property type="entry name" value="Septum_form_inhib_MinC_C"/>
</dbReference>
<dbReference type="NCBIfam" id="TIGR01222">
    <property type="entry name" value="minC"/>
    <property type="match status" value="1"/>
</dbReference>
<dbReference type="PANTHER" id="PTHR34108">
    <property type="entry name" value="SEPTUM SITE-DETERMINING PROTEIN MINC"/>
    <property type="match status" value="1"/>
</dbReference>
<dbReference type="PANTHER" id="PTHR34108:SF1">
    <property type="entry name" value="SEPTUM SITE-DETERMINING PROTEIN MINC"/>
    <property type="match status" value="1"/>
</dbReference>
<dbReference type="Pfam" id="PF03775">
    <property type="entry name" value="MinC_C"/>
    <property type="match status" value="1"/>
</dbReference>
<dbReference type="Pfam" id="PF05209">
    <property type="entry name" value="MinC_N"/>
    <property type="match status" value="1"/>
</dbReference>
<dbReference type="SUPFAM" id="SSF63848">
    <property type="entry name" value="Cell-division inhibitor MinC, C-terminal domain"/>
    <property type="match status" value="1"/>
</dbReference>
<feature type="chain" id="PRO_0000189021" description="Probable septum site-determining protein MinC">
    <location>
        <begin position="1"/>
        <end position="231"/>
    </location>
</feature>
<keyword id="KW-0131">Cell cycle</keyword>
<keyword id="KW-0132">Cell division</keyword>
<keyword id="KW-1185">Reference proteome</keyword>
<keyword id="KW-0717">Septation</keyword>
<accession>Q89MI2</accession>
<name>MINC_BRADU</name>
<gene>
    <name evidence="1" type="primary">minC</name>
    <name type="ordered locus">blr4211</name>
</gene>
<reference key="1">
    <citation type="journal article" date="2002" name="DNA Res.">
        <title>Complete genomic sequence of nitrogen-fixing symbiotic bacterium Bradyrhizobium japonicum USDA110.</title>
        <authorList>
            <person name="Kaneko T."/>
            <person name="Nakamura Y."/>
            <person name="Sato S."/>
            <person name="Minamisawa K."/>
            <person name="Uchiumi T."/>
            <person name="Sasamoto S."/>
            <person name="Watanabe A."/>
            <person name="Idesawa K."/>
            <person name="Iriguchi M."/>
            <person name="Kawashima K."/>
            <person name="Kohara M."/>
            <person name="Matsumoto M."/>
            <person name="Shimpo S."/>
            <person name="Tsuruoka H."/>
            <person name="Wada T."/>
            <person name="Yamada M."/>
            <person name="Tabata S."/>
        </authorList>
    </citation>
    <scope>NUCLEOTIDE SEQUENCE [LARGE SCALE GENOMIC DNA]</scope>
    <source>
        <strain>JCM 10833 / BCRC 13528 / IAM 13628 / NBRC 14792 / USDA 110</strain>
    </source>
</reference>
<comment type="function">
    <text evidence="1">Cell division inhibitor that blocks the formation of polar Z ring septums. Rapidly oscillates between the poles of the cell to destabilize FtsZ filaments that have formed before they mature into polar Z rings. Prevents FtsZ polymerization.</text>
</comment>
<comment type="subunit">
    <text evidence="1">Interacts with MinD and FtsZ.</text>
</comment>
<comment type="similarity">
    <text evidence="1">Belongs to the MinC family.</text>
</comment>
<proteinExistence type="inferred from homology"/>